<accession>P26683</accession>
<organism>
    <name type="scientific">Nostoc sp. (strain PCC 7120 / SAG 25.82 / UTEX 2576)</name>
    <dbReference type="NCBI Taxonomy" id="103690"/>
    <lineage>
        <taxon>Bacteria</taxon>
        <taxon>Bacillati</taxon>
        <taxon>Cyanobacteriota</taxon>
        <taxon>Cyanophyceae</taxon>
        <taxon>Nostocales</taxon>
        <taxon>Nostocaceae</taxon>
        <taxon>Nostoc</taxon>
    </lineage>
</organism>
<comment type="function">
    <text evidence="1">Sigma factors are initiation factors that promote the attachment of RNA polymerase to specific initiation sites and are then released. This sigma factor is the primary sigma factor during exponential growth.</text>
</comment>
<comment type="subunit">
    <text evidence="1">Interacts transiently with the RNA polymerase catalytic core.</text>
</comment>
<comment type="subcellular location">
    <subcellularLocation>
        <location evidence="1">Cytoplasm</location>
    </subcellularLocation>
</comment>
<comment type="similarity">
    <text evidence="1">Belongs to the sigma-70 factor family. RpoD/SigA subfamily.</text>
</comment>
<proteinExistence type="evidence at protein level"/>
<name>SIGA_NOSS1</name>
<dbReference type="EMBL" id="M60046">
    <property type="protein sequence ID" value="AAA22043.1"/>
    <property type="molecule type" value="Genomic_DNA"/>
</dbReference>
<dbReference type="EMBL" id="BA000019">
    <property type="protein sequence ID" value="BAB76962.1"/>
    <property type="molecule type" value="Genomic_DNA"/>
</dbReference>
<dbReference type="PIR" id="A42724">
    <property type="entry name" value="A42724"/>
</dbReference>
<dbReference type="PIR" id="AG2463">
    <property type="entry name" value="AG2463"/>
</dbReference>
<dbReference type="RefSeq" id="WP_010999387.1">
    <property type="nucleotide sequence ID" value="NZ_RSCN01000005.1"/>
</dbReference>
<dbReference type="PDB" id="8H3V">
    <property type="method" value="EM"/>
    <property type="resolution" value="4.50 A"/>
    <property type="chains" value="G=1-390"/>
</dbReference>
<dbReference type="PDB" id="8H40">
    <property type="method" value="EM"/>
    <property type="resolution" value="3.60 A"/>
    <property type="chains" value="G=1-390"/>
</dbReference>
<dbReference type="PDBsum" id="8H3V"/>
<dbReference type="PDBsum" id="8H40"/>
<dbReference type="EMDB" id="EMD-34475"/>
<dbReference type="EMDB" id="EMD-34476"/>
<dbReference type="SMR" id="P26683"/>
<dbReference type="STRING" id="103690.gene:10497322"/>
<dbReference type="GeneID" id="58724073"/>
<dbReference type="KEGG" id="ana:all5263"/>
<dbReference type="eggNOG" id="COG0568">
    <property type="taxonomic scope" value="Bacteria"/>
</dbReference>
<dbReference type="OrthoDB" id="1185556at2"/>
<dbReference type="Proteomes" id="UP000002483">
    <property type="component" value="Chromosome"/>
</dbReference>
<dbReference type="GO" id="GO:0005737">
    <property type="term" value="C:cytoplasm"/>
    <property type="evidence" value="ECO:0007669"/>
    <property type="project" value="UniProtKB-SubCell"/>
</dbReference>
<dbReference type="GO" id="GO:0003677">
    <property type="term" value="F:DNA binding"/>
    <property type="evidence" value="ECO:0007669"/>
    <property type="project" value="UniProtKB-UniRule"/>
</dbReference>
<dbReference type="GO" id="GO:0016987">
    <property type="term" value="F:sigma factor activity"/>
    <property type="evidence" value="ECO:0007669"/>
    <property type="project" value="UniProtKB-UniRule"/>
</dbReference>
<dbReference type="GO" id="GO:0006352">
    <property type="term" value="P:DNA-templated transcription initiation"/>
    <property type="evidence" value="ECO:0007669"/>
    <property type="project" value="UniProtKB-UniRule"/>
</dbReference>
<dbReference type="CDD" id="cd06171">
    <property type="entry name" value="Sigma70_r4"/>
    <property type="match status" value="1"/>
</dbReference>
<dbReference type="FunFam" id="1.10.601.10:FF:000001">
    <property type="entry name" value="RNA polymerase sigma factor SigA"/>
    <property type="match status" value="1"/>
</dbReference>
<dbReference type="Gene3D" id="1.10.601.10">
    <property type="entry name" value="RNA Polymerase Primary Sigma Factor"/>
    <property type="match status" value="2"/>
</dbReference>
<dbReference type="Gene3D" id="1.10.10.10">
    <property type="entry name" value="Winged helix-like DNA-binding domain superfamily/Winged helix DNA-binding domain"/>
    <property type="match status" value="2"/>
</dbReference>
<dbReference type="HAMAP" id="MF_00963">
    <property type="entry name" value="Sigma70_RpoD_SigA"/>
    <property type="match status" value="1"/>
</dbReference>
<dbReference type="InterPro" id="IPR014284">
    <property type="entry name" value="RNA_pol_sigma-70_dom"/>
</dbReference>
<dbReference type="InterPro" id="IPR000943">
    <property type="entry name" value="RNA_pol_sigma70"/>
</dbReference>
<dbReference type="InterPro" id="IPR009042">
    <property type="entry name" value="RNA_pol_sigma70_r1_2"/>
</dbReference>
<dbReference type="InterPro" id="IPR007627">
    <property type="entry name" value="RNA_pol_sigma70_r2"/>
</dbReference>
<dbReference type="InterPro" id="IPR007624">
    <property type="entry name" value="RNA_pol_sigma70_r3"/>
</dbReference>
<dbReference type="InterPro" id="IPR007630">
    <property type="entry name" value="RNA_pol_sigma70_r4"/>
</dbReference>
<dbReference type="InterPro" id="IPR013325">
    <property type="entry name" value="RNA_pol_sigma_r2"/>
</dbReference>
<dbReference type="InterPro" id="IPR013324">
    <property type="entry name" value="RNA_pol_sigma_r3/r4-like"/>
</dbReference>
<dbReference type="InterPro" id="IPR017848">
    <property type="entry name" value="RNA_pol_sigma_RpoD/SigA_cyanob"/>
</dbReference>
<dbReference type="InterPro" id="IPR012760">
    <property type="entry name" value="RNA_pol_sigma_RpoD_C"/>
</dbReference>
<dbReference type="InterPro" id="IPR050239">
    <property type="entry name" value="Sigma-70_RNA_pol_init_factors"/>
</dbReference>
<dbReference type="InterPro" id="IPR028630">
    <property type="entry name" value="Sigma70_RpoD"/>
</dbReference>
<dbReference type="InterPro" id="IPR036388">
    <property type="entry name" value="WH-like_DNA-bd_sf"/>
</dbReference>
<dbReference type="NCBIfam" id="NF005643">
    <property type="entry name" value="PRK07406.1"/>
    <property type="match status" value="1"/>
</dbReference>
<dbReference type="NCBIfam" id="TIGR02393">
    <property type="entry name" value="RpoD_Cterm"/>
    <property type="match status" value="1"/>
</dbReference>
<dbReference type="NCBIfam" id="TIGR02997">
    <property type="entry name" value="Sig70-cyanoRpoD"/>
    <property type="match status" value="1"/>
</dbReference>
<dbReference type="NCBIfam" id="TIGR02937">
    <property type="entry name" value="sigma70-ECF"/>
    <property type="match status" value="1"/>
</dbReference>
<dbReference type="PANTHER" id="PTHR30603">
    <property type="entry name" value="RNA POLYMERASE SIGMA FACTOR RPO"/>
    <property type="match status" value="1"/>
</dbReference>
<dbReference type="PANTHER" id="PTHR30603:SF62">
    <property type="entry name" value="RNA POLYMERASE SIGMA FACTOR SIGA"/>
    <property type="match status" value="1"/>
</dbReference>
<dbReference type="Pfam" id="PF00140">
    <property type="entry name" value="Sigma70_r1_2"/>
    <property type="match status" value="1"/>
</dbReference>
<dbReference type="Pfam" id="PF04542">
    <property type="entry name" value="Sigma70_r2"/>
    <property type="match status" value="1"/>
</dbReference>
<dbReference type="Pfam" id="PF04539">
    <property type="entry name" value="Sigma70_r3"/>
    <property type="match status" value="1"/>
</dbReference>
<dbReference type="Pfam" id="PF04545">
    <property type="entry name" value="Sigma70_r4"/>
    <property type="match status" value="1"/>
</dbReference>
<dbReference type="PRINTS" id="PR00046">
    <property type="entry name" value="SIGMA70FCT"/>
</dbReference>
<dbReference type="SUPFAM" id="SSF88946">
    <property type="entry name" value="Sigma2 domain of RNA polymerase sigma factors"/>
    <property type="match status" value="1"/>
</dbReference>
<dbReference type="SUPFAM" id="SSF88659">
    <property type="entry name" value="Sigma3 and sigma4 domains of RNA polymerase sigma factors"/>
    <property type="match status" value="2"/>
</dbReference>
<dbReference type="PROSITE" id="PS00715">
    <property type="entry name" value="SIGMA70_1"/>
    <property type="match status" value="1"/>
</dbReference>
<dbReference type="PROSITE" id="PS00716">
    <property type="entry name" value="SIGMA70_2"/>
    <property type="match status" value="1"/>
</dbReference>
<feature type="chain" id="PRO_0000093872" description="RNA polymerase sigma factor SigA">
    <location>
        <begin position="1"/>
        <end position="390"/>
    </location>
</feature>
<feature type="DNA-binding region" description="H-T-H motif" evidence="1">
    <location>
        <begin position="351"/>
        <end position="370"/>
    </location>
</feature>
<feature type="region of interest" description="Disordered" evidence="2">
    <location>
        <begin position="48"/>
        <end position="75"/>
    </location>
</feature>
<feature type="region of interest" description="Sigma-70 factor domain-2" evidence="1">
    <location>
        <begin position="158"/>
        <end position="228"/>
    </location>
</feature>
<feature type="region of interest" description="Sigma-70 factor domain-3" evidence="1">
    <location>
        <begin position="237"/>
        <end position="312"/>
    </location>
</feature>
<feature type="region of interest" description="Sigma-70 factor domain-4" evidence="1">
    <location>
        <begin position="325"/>
        <end position="378"/>
    </location>
</feature>
<feature type="short sequence motif" description="Interaction with polymerase core subunit RpoC">
    <location>
        <begin position="182"/>
        <end position="185"/>
    </location>
</feature>
<feature type="compositionally biased region" description="Acidic residues" evidence="2">
    <location>
        <begin position="48"/>
        <end position="57"/>
    </location>
</feature>
<feature type="compositionally biased region" description="Basic residues" evidence="2">
    <location>
        <begin position="62"/>
        <end position="75"/>
    </location>
</feature>
<reference key="1">
    <citation type="journal article" date="1991" name="J. Bacteriol.">
        <title>Isolation and characterization of the gene encoding the principal sigma factor of the vegetative cell RNA polymerase from the cyanobacterium Anabaena sp. strain PCC 7120.</title>
        <authorList>
            <person name="Brahamsha B."/>
            <person name="Haselkorn R."/>
        </authorList>
    </citation>
    <scope>NUCLEOTIDE SEQUENCE [GENOMIC DNA]</scope>
</reference>
<reference key="2">
    <citation type="journal article" date="2001" name="DNA Res.">
        <title>Complete genomic sequence of the filamentous nitrogen-fixing cyanobacterium Anabaena sp. strain PCC 7120.</title>
        <authorList>
            <person name="Kaneko T."/>
            <person name="Nakamura Y."/>
            <person name="Wolk C.P."/>
            <person name="Kuritz T."/>
            <person name="Sasamoto S."/>
            <person name="Watanabe A."/>
            <person name="Iriguchi M."/>
            <person name="Ishikawa A."/>
            <person name="Kawashima K."/>
            <person name="Kimura T."/>
            <person name="Kishida Y."/>
            <person name="Kohara M."/>
            <person name="Matsumoto M."/>
            <person name="Matsuno A."/>
            <person name="Muraki A."/>
            <person name="Nakazaki N."/>
            <person name="Shimpo S."/>
            <person name="Sugimoto M."/>
            <person name="Takazawa M."/>
            <person name="Yamada M."/>
            <person name="Yasuda M."/>
            <person name="Tabata S."/>
        </authorList>
    </citation>
    <scope>NUCLEOTIDE SEQUENCE [LARGE SCALE GENOMIC DNA]</scope>
    <source>
        <strain>PCC 7120 / SAG 25.82 / UTEX 2576</strain>
    </source>
</reference>
<gene>
    <name evidence="1" type="primary">sigA</name>
    <name type="synonym">rpoD</name>
    <name type="ordered locus">all5263</name>
</gene>
<protein>
    <recommendedName>
        <fullName evidence="1">RNA polymerase sigma factor SigA</fullName>
    </recommendedName>
    <alternativeName>
        <fullName>Sigma-A</fullName>
    </alternativeName>
</protein>
<keyword id="KW-0002">3D-structure</keyword>
<keyword id="KW-0963">Cytoplasm</keyword>
<keyword id="KW-0238">DNA-binding</keyword>
<keyword id="KW-1185">Reference proteome</keyword>
<keyword id="KW-0731">Sigma factor</keyword>
<keyword id="KW-0804">Transcription</keyword>
<keyword id="KW-0805">Transcription regulation</keyword>
<sequence length="390" mass="45642">MNQANNVLDSIYQPDLEIMNQPEIELDDLLIEEDEDLLLADDGDIDEFLEPQTDEDDAKSGKAAKSRRRTQSKKKHYTEDSIRLYLQEIGRIRLLRADEEIELARKIADLLELERVRERLSEKLERDPRDSEWAEAVQLPLPAFRYRLHIGRRAKDKMVQSNLRLVVSIAKKYMNRGLSFQDLIQEGSLGLIRAAEKFDHEKGYKFSTYATWWIRQAITRAIADQSRTIRLPVHLYETISRIKKTTKLLSQEMGRKPTEEEIATRMEMTIEKLRFIAKSAQLPISLETPIGKEEDSRLGDFIESDGETPEDQVSKNLLREDLEKVLDSLSPRERDVLRLRYGLDDGRMKTLEEIGQIFNVTRERIRQIEAKALRKLRHPNRNSVLKEYIR</sequence>
<evidence type="ECO:0000255" key="1">
    <source>
        <dbReference type="HAMAP-Rule" id="MF_00963"/>
    </source>
</evidence>
<evidence type="ECO:0000256" key="2">
    <source>
        <dbReference type="SAM" id="MobiDB-lite"/>
    </source>
</evidence>